<dbReference type="EMBL" id="X54453">
    <property type="protein sequence ID" value="CAA38321.1"/>
    <property type="molecule type" value="mRNA"/>
</dbReference>
<dbReference type="EMBL" id="U31961">
    <property type="protein sequence ID" value="AAA84405.1"/>
    <property type="molecule type" value="Genomic_DNA"/>
</dbReference>
<dbReference type="EMBL" id="U31961">
    <property type="protein sequence ID" value="AAA84406.1"/>
    <property type="molecule type" value="Genomic_DNA"/>
</dbReference>
<dbReference type="EMBL" id="AE014297">
    <property type="protein sequence ID" value="AAF55359.1"/>
    <property type="molecule type" value="Genomic_DNA"/>
</dbReference>
<dbReference type="EMBL" id="AE014297">
    <property type="protein sequence ID" value="AAF55360.2"/>
    <property type="molecule type" value="Genomic_DNA"/>
</dbReference>
<dbReference type="EMBL" id="BT016031">
    <property type="protein sequence ID" value="AAV36916.1"/>
    <property type="molecule type" value="mRNA"/>
</dbReference>
<dbReference type="PIR" id="A35915">
    <property type="entry name" value="A35915"/>
</dbReference>
<dbReference type="RefSeq" id="NP_001163632.1">
    <molecule id="P29555-2"/>
    <property type="nucleotide sequence ID" value="NM_001170161.2"/>
</dbReference>
<dbReference type="RefSeq" id="NP_001247145.1">
    <molecule id="P29555-2"/>
    <property type="nucleotide sequence ID" value="NM_001260216.2"/>
</dbReference>
<dbReference type="RefSeq" id="NP_476693.1">
    <molecule id="P29555-2"/>
    <property type="nucleotide sequence ID" value="NM_057345.5"/>
</dbReference>
<dbReference type="RefSeq" id="NP_732176.1">
    <molecule id="P29555-1"/>
    <property type="nucleotide sequence ID" value="NM_169733.5"/>
</dbReference>
<dbReference type="PDB" id="8F37">
    <property type="method" value="NMR"/>
    <property type="chains" value="A=398-457"/>
</dbReference>
<dbReference type="PDBsum" id="8F37"/>
<dbReference type="SMR" id="P29555"/>
<dbReference type="BioGRID" id="67081">
    <property type="interactions" value="170"/>
</dbReference>
<dbReference type="DIP" id="DIP-17987N"/>
<dbReference type="FunCoup" id="P29555">
    <property type="interactions" value="22"/>
</dbReference>
<dbReference type="IntAct" id="P29555">
    <property type="interactions" value="1"/>
</dbReference>
<dbReference type="STRING" id="7227.FBpp0082829"/>
<dbReference type="PaxDb" id="7227-FBpp0082829"/>
<dbReference type="DNASU" id="42037"/>
<dbReference type="EnsemblMetazoa" id="FBtr0083387">
    <molecule id="P29555-2"/>
    <property type="protein sequence ID" value="FBpp0082828"/>
    <property type="gene ID" value="FBgn0000014"/>
</dbReference>
<dbReference type="EnsemblMetazoa" id="FBtr0083388">
    <molecule id="P29555-1"/>
    <property type="protein sequence ID" value="FBpp0082829"/>
    <property type="gene ID" value="FBgn0000014"/>
</dbReference>
<dbReference type="EnsemblMetazoa" id="FBtr0300485">
    <molecule id="P29555-2"/>
    <property type="protein sequence ID" value="FBpp0289712"/>
    <property type="gene ID" value="FBgn0000014"/>
</dbReference>
<dbReference type="EnsemblMetazoa" id="FBtr0306337">
    <molecule id="P29555-2"/>
    <property type="protein sequence ID" value="FBpp0297433"/>
    <property type="gene ID" value="FBgn0000014"/>
</dbReference>
<dbReference type="GeneID" id="42037"/>
<dbReference type="KEGG" id="dme:Dmel_CG10325"/>
<dbReference type="AGR" id="FB:FBgn0000014"/>
<dbReference type="CTD" id="42037"/>
<dbReference type="FlyBase" id="FBgn0000014">
    <property type="gene designation" value="abd-A"/>
</dbReference>
<dbReference type="VEuPathDB" id="VectorBase:FBgn0000014"/>
<dbReference type="eggNOG" id="KOG0489">
    <property type="taxonomic scope" value="Eukaryota"/>
</dbReference>
<dbReference type="GeneTree" id="ENSGT00940000165065"/>
<dbReference type="HOGENOM" id="CLU_462541_0_0_1"/>
<dbReference type="InParanoid" id="P29555"/>
<dbReference type="OMA" id="HHSIITH"/>
<dbReference type="OrthoDB" id="6159439at2759"/>
<dbReference type="PhylomeDB" id="P29555"/>
<dbReference type="SignaLink" id="P29555"/>
<dbReference type="BioGRID-ORCS" id="42037">
    <property type="hits" value="0 hits in 3 CRISPR screens"/>
</dbReference>
<dbReference type="GenomeRNAi" id="42037"/>
<dbReference type="PRO" id="PR:P29555"/>
<dbReference type="Proteomes" id="UP000000803">
    <property type="component" value="Chromosome 3R"/>
</dbReference>
<dbReference type="Bgee" id="FBgn0000014">
    <property type="expression patterns" value="Expressed in male accessory gland secondary cell (Drosophila) in male reproductive gland and 75 other cell types or tissues"/>
</dbReference>
<dbReference type="ExpressionAtlas" id="P29555">
    <property type="expression patterns" value="baseline and differential"/>
</dbReference>
<dbReference type="GO" id="GO:0005634">
    <property type="term" value="C:nucleus"/>
    <property type="evidence" value="ECO:0000314"/>
    <property type="project" value="FlyBase"/>
</dbReference>
<dbReference type="GO" id="GO:0005704">
    <property type="term" value="C:polytene chromosome band"/>
    <property type="evidence" value="ECO:0000314"/>
    <property type="project" value="FlyBase"/>
</dbReference>
<dbReference type="GO" id="GO:0090575">
    <property type="term" value="C:RNA polymerase II transcription regulator complex"/>
    <property type="evidence" value="ECO:0000353"/>
    <property type="project" value="FlyBase"/>
</dbReference>
<dbReference type="GO" id="GO:0005667">
    <property type="term" value="C:transcription regulator complex"/>
    <property type="evidence" value="ECO:0000314"/>
    <property type="project" value="CAFA"/>
</dbReference>
<dbReference type="GO" id="GO:0000987">
    <property type="term" value="F:cis-regulatory region sequence-specific DNA binding"/>
    <property type="evidence" value="ECO:0000314"/>
    <property type="project" value="FlyBase"/>
</dbReference>
<dbReference type="GO" id="GO:0003700">
    <property type="term" value="F:DNA-binding transcription factor activity"/>
    <property type="evidence" value="ECO:0000315"/>
    <property type="project" value="UniProtKB"/>
</dbReference>
<dbReference type="GO" id="GO:0000981">
    <property type="term" value="F:DNA-binding transcription factor activity, RNA polymerase II-specific"/>
    <property type="evidence" value="ECO:0000314"/>
    <property type="project" value="FlyBase"/>
</dbReference>
<dbReference type="GO" id="GO:0140297">
    <property type="term" value="F:DNA-binding transcription factor binding"/>
    <property type="evidence" value="ECO:0000353"/>
    <property type="project" value="CAFA"/>
</dbReference>
<dbReference type="GO" id="GO:0000978">
    <property type="term" value="F:RNA polymerase II cis-regulatory region sequence-specific DNA binding"/>
    <property type="evidence" value="ECO:0000318"/>
    <property type="project" value="GO_Central"/>
</dbReference>
<dbReference type="GO" id="GO:0043565">
    <property type="term" value="F:sequence-specific DNA binding"/>
    <property type="evidence" value="ECO:0000314"/>
    <property type="project" value="FlyBase"/>
</dbReference>
<dbReference type="GO" id="GO:0009952">
    <property type="term" value="P:anterior/posterior pattern specification"/>
    <property type="evidence" value="ECO:0000315"/>
    <property type="project" value="UniProtKB"/>
</dbReference>
<dbReference type="GO" id="GO:0006915">
    <property type="term" value="P:apoptotic process"/>
    <property type="evidence" value="ECO:0000315"/>
    <property type="project" value="FlyBase"/>
</dbReference>
<dbReference type="GO" id="GO:0048738">
    <property type="term" value="P:cardiac muscle tissue development"/>
    <property type="evidence" value="ECO:0000315"/>
    <property type="project" value="FlyBase"/>
</dbReference>
<dbReference type="GO" id="GO:0010002">
    <property type="term" value="P:cardioblast differentiation"/>
    <property type="evidence" value="ECO:0000315"/>
    <property type="project" value="FlyBase"/>
</dbReference>
<dbReference type="GO" id="GO:0035225">
    <property type="term" value="P:determination of genital disc primordium"/>
    <property type="evidence" value="ECO:0000315"/>
    <property type="project" value="FlyBase"/>
</dbReference>
<dbReference type="GO" id="GO:0035053">
    <property type="term" value="P:dorsal vessel heart proper cell fate commitment"/>
    <property type="evidence" value="ECO:0000315"/>
    <property type="project" value="FlyBase"/>
</dbReference>
<dbReference type="GO" id="GO:0035224">
    <property type="term" value="P:genital disc anterior/posterior pattern formation"/>
    <property type="evidence" value="ECO:0000270"/>
    <property type="project" value="FlyBase"/>
</dbReference>
<dbReference type="GO" id="GO:0048806">
    <property type="term" value="P:genitalia development"/>
    <property type="evidence" value="ECO:0000315"/>
    <property type="project" value="FlyBase"/>
</dbReference>
<dbReference type="GO" id="GO:0008354">
    <property type="term" value="P:germ cell migration"/>
    <property type="evidence" value="ECO:0000315"/>
    <property type="project" value="FlyBase"/>
</dbReference>
<dbReference type="GO" id="GO:0008406">
    <property type="term" value="P:gonad development"/>
    <property type="evidence" value="ECO:0000304"/>
    <property type="project" value="FlyBase"/>
</dbReference>
<dbReference type="GO" id="GO:0007506">
    <property type="term" value="P:gonadal mesoderm development"/>
    <property type="evidence" value="ECO:0000315"/>
    <property type="project" value="FlyBase"/>
</dbReference>
<dbReference type="GO" id="GO:0007507">
    <property type="term" value="P:heart development"/>
    <property type="evidence" value="ECO:0000315"/>
    <property type="project" value="FlyBase"/>
</dbReference>
<dbReference type="GO" id="GO:0007501">
    <property type="term" value="P:mesodermal cell fate specification"/>
    <property type="evidence" value="ECO:0000315"/>
    <property type="project" value="FlyBase"/>
</dbReference>
<dbReference type="GO" id="GO:0007494">
    <property type="term" value="P:midgut development"/>
    <property type="evidence" value="ECO:0000304"/>
    <property type="project" value="FlyBase"/>
</dbReference>
<dbReference type="GO" id="GO:0042694">
    <property type="term" value="P:muscle cell fate specification"/>
    <property type="evidence" value="ECO:0000315"/>
    <property type="project" value="FlyBase"/>
</dbReference>
<dbReference type="GO" id="GO:0000122">
    <property type="term" value="P:negative regulation of transcription by RNA polymerase II"/>
    <property type="evidence" value="ECO:0000318"/>
    <property type="project" value="GO_Central"/>
</dbReference>
<dbReference type="GO" id="GO:0007399">
    <property type="term" value="P:nervous system development"/>
    <property type="evidence" value="ECO:0000315"/>
    <property type="project" value="FlyBase"/>
</dbReference>
<dbReference type="GO" id="GO:0014019">
    <property type="term" value="P:neuroblast development"/>
    <property type="evidence" value="ECO:0000315"/>
    <property type="project" value="FlyBase"/>
</dbReference>
<dbReference type="GO" id="GO:0007400">
    <property type="term" value="P:neuroblast fate determination"/>
    <property type="evidence" value="ECO:0000315"/>
    <property type="project" value="FlyBase"/>
</dbReference>
<dbReference type="GO" id="GO:0007438">
    <property type="term" value="P:oenocyte development"/>
    <property type="evidence" value="ECO:0000315"/>
    <property type="project" value="FlyBase"/>
</dbReference>
<dbReference type="GO" id="GO:0001742">
    <property type="term" value="P:oenocyte differentiation"/>
    <property type="evidence" value="ECO:0000315"/>
    <property type="project" value="FlyBase"/>
</dbReference>
<dbReference type="GO" id="GO:0007422">
    <property type="term" value="P:peripheral nervous system development"/>
    <property type="evidence" value="ECO:0000304"/>
    <property type="project" value="FlyBase"/>
</dbReference>
<dbReference type="GO" id="GO:0045893">
    <property type="term" value="P:positive regulation of DNA-templated transcription"/>
    <property type="evidence" value="ECO:0000314"/>
    <property type="project" value="CAFA"/>
</dbReference>
<dbReference type="GO" id="GO:0048636">
    <property type="term" value="P:positive regulation of muscle organ development"/>
    <property type="evidence" value="ECO:0000315"/>
    <property type="project" value="FlyBase"/>
</dbReference>
<dbReference type="GO" id="GO:0045944">
    <property type="term" value="P:positive regulation of transcription by RNA polymerase II"/>
    <property type="evidence" value="ECO:0000314"/>
    <property type="project" value="FlyBase"/>
</dbReference>
<dbReference type="GO" id="GO:0006355">
    <property type="term" value="P:regulation of DNA-templated transcription"/>
    <property type="evidence" value="ECO:0000315"/>
    <property type="project" value="UniProtKB"/>
</dbReference>
<dbReference type="CDD" id="cd00086">
    <property type="entry name" value="homeodomain"/>
    <property type="match status" value="1"/>
</dbReference>
<dbReference type="FunFam" id="1.10.10.60:FF:000317">
    <property type="entry name" value="homeobox protein abdominal-A"/>
    <property type="match status" value="1"/>
</dbReference>
<dbReference type="Gene3D" id="1.10.10.60">
    <property type="entry name" value="Homeodomain-like"/>
    <property type="match status" value="1"/>
</dbReference>
<dbReference type="InterPro" id="IPR022132">
    <property type="entry name" value="Abdominal-A"/>
</dbReference>
<dbReference type="InterPro" id="IPR050296">
    <property type="entry name" value="Antp_homeobox"/>
</dbReference>
<dbReference type="InterPro" id="IPR001356">
    <property type="entry name" value="HD"/>
</dbReference>
<dbReference type="InterPro" id="IPR020479">
    <property type="entry name" value="HD_metazoa"/>
</dbReference>
<dbReference type="InterPro" id="IPR017970">
    <property type="entry name" value="Homeobox_CS"/>
</dbReference>
<dbReference type="InterPro" id="IPR009057">
    <property type="entry name" value="Homeodomain-like_sf"/>
</dbReference>
<dbReference type="PANTHER" id="PTHR45659:SF4">
    <property type="entry name" value="HOMEOBOX PROTEIN ABDOMINAL-A"/>
    <property type="match status" value="1"/>
</dbReference>
<dbReference type="PANTHER" id="PTHR45659">
    <property type="entry name" value="HOMEOBOX PROTEIN HOX"/>
    <property type="match status" value="1"/>
</dbReference>
<dbReference type="Pfam" id="PF12407">
    <property type="entry name" value="Abdominal-A"/>
    <property type="match status" value="1"/>
</dbReference>
<dbReference type="Pfam" id="PF00046">
    <property type="entry name" value="Homeodomain"/>
    <property type="match status" value="1"/>
</dbReference>
<dbReference type="PRINTS" id="PR00024">
    <property type="entry name" value="HOMEOBOX"/>
</dbReference>
<dbReference type="SMART" id="SM00389">
    <property type="entry name" value="HOX"/>
    <property type="match status" value="1"/>
</dbReference>
<dbReference type="SUPFAM" id="SSF46689">
    <property type="entry name" value="Homeodomain-like"/>
    <property type="match status" value="1"/>
</dbReference>
<dbReference type="PROSITE" id="PS00027">
    <property type="entry name" value="HOMEOBOX_1"/>
    <property type="match status" value="1"/>
</dbReference>
<dbReference type="PROSITE" id="PS50071">
    <property type="entry name" value="HOMEOBOX_2"/>
    <property type="match status" value="1"/>
</dbReference>
<comment type="function">
    <text evidence="3">Sequence-specific transcription factor which is part of a developmental regulatory system that provides cells with specific positional identities on the anterior-posterior axis. Required for segmental identity of the second through eighth abdominal segments. Once a pattern of abd-A expression is turned on in a given parasegment, it remains on the more posterior parasegment, so that the complex pattern of expression is built up in the successive parasegments. Appears to repress expression of Ubx whenever they appear in the same cell, but abd-A is repressed by Abd-B only in the eight and ninth abdominal segments.</text>
</comment>
<comment type="subcellular location">
    <subcellularLocation>
        <location evidence="7">Nucleus</location>
    </subcellularLocation>
</comment>
<comment type="alternative products">
    <event type="alternative splicing"/>
    <isoform>
        <id>P29555-1</id>
        <name>Abd-A2</name>
        <name>ABD-AII</name>
        <name>B</name>
        <sequence type="displayed"/>
    </isoform>
    <isoform>
        <id>P29555-2</id>
        <name>Abd-A1</name>
        <name>ABD-AI</name>
        <name>A</name>
        <sequence type="described" ref="VSP_002394"/>
    </isoform>
</comment>
<comment type="similarity">
    <text evidence="6">Belongs to the Antp homeobox family.</text>
</comment>
<sequence>MSKFVFDSMLPKYPQFQPFISSHHLTTTPPNSSSAAVAAALAAAAASASASVSASSSSNNNSSNTIAGSNTSNTNNSSSSPSSSSNNNSNLNLSGGSLSPSHLSQHLGQSPHSPVSSSSPFQQHHPQVQQQHLNHQQQQHLHHQQQQHHHQYSSLSAALQLQQQQHHISKLAAAAVASHGHAHQQLLLTPPSAGNSQAGDSSCSPSPSASGSSSLHRSLNDNSPGSASASASASAASSVAAAAAAAAAAASSSFAIPTSKMYPYVSNHPSSHGGLSGMAGFTGLEDKSCSRYTDTVMNSYQSMSVPASASAQFAQFYQHATAAASAVSAASAGAIGVDSLGNACTQPASGVMPGAGGAGGAGIADLPRYPWMTLTDWMGSPFERVVCGDFNGPNGCPRRRGRQTYTRFQTLELEKEFHFNHYLTRRRRIEIAHALCLTERQIKIWFQNRRMKLKKELRAVKEINEQARRDREEQEKMKAQETMKSAQQNKQVQQQQQQQQQQQQQQQQQHQQQQQQPQDHHSIIAHNPGHLHHSVVGQNDLKLGLGMGVGVGVGGIGPGIGGGLGGNLGMMSALDKSNHDLLKAVSKVNS</sequence>
<evidence type="ECO:0000255" key="1">
    <source>
        <dbReference type="PROSITE-ProRule" id="PRU00108"/>
    </source>
</evidence>
<evidence type="ECO:0000256" key="2">
    <source>
        <dbReference type="SAM" id="MobiDB-lite"/>
    </source>
</evidence>
<evidence type="ECO:0000269" key="3">
    <source>
    </source>
</evidence>
<evidence type="ECO:0000303" key="4">
    <source>
    </source>
</evidence>
<evidence type="ECO:0000303" key="5">
    <source ref="5"/>
</evidence>
<evidence type="ECO:0000305" key="6"/>
<evidence type="ECO:0000305" key="7">
    <source>
    </source>
</evidence>
<evidence type="ECO:0007829" key="8">
    <source>
        <dbReference type="PDB" id="8F37"/>
    </source>
</evidence>
<gene>
    <name type="primary">abd-A</name>
    <name type="ORF">CG10325</name>
</gene>
<keyword id="KW-0002">3D-structure</keyword>
<keyword id="KW-0025">Alternative splicing</keyword>
<keyword id="KW-0217">Developmental protein</keyword>
<keyword id="KW-0238">DNA-binding</keyword>
<keyword id="KW-0371">Homeobox</keyword>
<keyword id="KW-0539">Nucleus</keyword>
<keyword id="KW-1185">Reference proteome</keyword>
<reference key="1">
    <citation type="journal article" date="1990" name="Genes Dev.">
        <title>abdA expression in Drosophila embryos.</title>
        <authorList>
            <person name="Karch F."/>
            <person name="Bender W."/>
            <person name="Weiffenbach B."/>
        </authorList>
    </citation>
    <scope>NUCLEOTIDE SEQUENCE [MRNA] (ISOFORM ABD-A1)</scope>
    <scope>FUNCTION</scope>
    <scope>SUBCELLULAR LOCATION</scope>
</reference>
<reference key="2">
    <citation type="journal article" date="1995" name="Proc. Natl. Acad. Sci. U.S.A.">
        <title>Complete sequence of the bithorax complex of Drosophila.</title>
        <authorList>
            <person name="Martin C.H."/>
            <person name="Mayeda C.A."/>
            <person name="Davis C.A."/>
            <person name="Ericsson C.L."/>
            <person name="Knafels J.D."/>
            <person name="Mathog D.R."/>
            <person name="Celniker S.E."/>
            <person name="Lewis E.B."/>
            <person name="Palazzolo M.J."/>
        </authorList>
    </citation>
    <scope>NUCLEOTIDE SEQUENCE [GENOMIC DNA]</scope>
    <scope>ALTERNATIVE SPLICING (ISOFORMS ABD-A1 AND ABD-A2)</scope>
    <source>
        <strain>Canton-S</strain>
    </source>
</reference>
<reference key="3">
    <citation type="journal article" date="2000" name="Science">
        <title>The genome sequence of Drosophila melanogaster.</title>
        <authorList>
            <person name="Adams M.D."/>
            <person name="Celniker S.E."/>
            <person name="Holt R.A."/>
            <person name="Evans C.A."/>
            <person name="Gocayne J.D."/>
            <person name="Amanatides P.G."/>
            <person name="Scherer S.E."/>
            <person name="Li P.W."/>
            <person name="Hoskins R.A."/>
            <person name="Galle R.F."/>
            <person name="George R.A."/>
            <person name="Lewis S.E."/>
            <person name="Richards S."/>
            <person name="Ashburner M."/>
            <person name="Henderson S.N."/>
            <person name="Sutton G.G."/>
            <person name="Wortman J.R."/>
            <person name="Yandell M.D."/>
            <person name="Zhang Q."/>
            <person name="Chen L.X."/>
            <person name="Brandon R.C."/>
            <person name="Rogers Y.-H.C."/>
            <person name="Blazej R.G."/>
            <person name="Champe M."/>
            <person name="Pfeiffer B.D."/>
            <person name="Wan K.H."/>
            <person name="Doyle C."/>
            <person name="Baxter E.G."/>
            <person name="Helt G."/>
            <person name="Nelson C.R."/>
            <person name="Miklos G.L.G."/>
            <person name="Abril J.F."/>
            <person name="Agbayani A."/>
            <person name="An H.-J."/>
            <person name="Andrews-Pfannkoch C."/>
            <person name="Baldwin D."/>
            <person name="Ballew R.M."/>
            <person name="Basu A."/>
            <person name="Baxendale J."/>
            <person name="Bayraktaroglu L."/>
            <person name="Beasley E.M."/>
            <person name="Beeson K.Y."/>
            <person name="Benos P.V."/>
            <person name="Berman B.P."/>
            <person name="Bhandari D."/>
            <person name="Bolshakov S."/>
            <person name="Borkova D."/>
            <person name="Botchan M.R."/>
            <person name="Bouck J."/>
            <person name="Brokstein P."/>
            <person name="Brottier P."/>
            <person name="Burtis K.C."/>
            <person name="Busam D.A."/>
            <person name="Butler H."/>
            <person name="Cadieu E."/>
            <person name="Center A."/>
            <person name="Chandra I."/>
            <person name="Cherry J.M."/>
            <person name="Cawley S."/>
            <person name="Dahlke C."/>
            <person name="Davenport L.B."/>
            <person name="Davies P."/>
            <person name="de Pablos B."/>
            <person name="Delcher A."/>
            <person name="Deng Z."/>
            <person name="Mays A.D."/>
            <person name="Dew I."/>
            <person name="Dietz S.M."/>
            <person name="Dodson K."/>
            <person name="Doup L.E."/>
            <person name="Downes M."/>
            <person name="Dugan-Rocha S."/>
            <person name="Dunkov B.C."/>
            <person name="Dunn P."/>
            <person name="Durbin K.J."/>
            <person name="Evangelista C.C."/>
            <person name="Ferraz C."/>
            <person name="Ferriera S."/>
            <person name="Fleischmann W."/>
            <person name="Fosler C."/>
            <person name="Gabrielian A.E."/>
            <person name="Garg N.S."/>
            <person name="Gelbart W.M."/>
            <person name="Glasser K."/>
            <person name="Glodek A."/>
            <person name="Gong F."/>
            <person name="Gorrell J.H."/>
            <person name="Gu Z."/>
            <person name="Guan P."/>
            <person name="Harris M."/>
            <person name="Harris N.L."/>
            <person name="Harvey D.A."/>
            <person name="Heiman T.J."/>
            <person name="Hernandez J.R."/>
            <person name="Houck J."/>
            <person name="Hostin D."/>
            <person name="Houston K.A."/>
            <person name="Howland T.J."/>
            <person name="Wei M.-H."/>
            <person name="Ibegwam C."/>
            <person name="Jalali M."/>
            <person name="Kalush F."/>
            <person name="Karpen G.H."/>
            <person name="Ke Z."/>
            <person name="Kennison J.A."/>
            <person name="Ketchum K.A."/>
            <person name="Kimmel B.E."/>
            <person name="Kodira C.D."/>
            <person name="Kraft C.L."/>
            <person name="Kravitz S."/>
            <person name="Kulp D."/>
            <person name="Lai Z."/>
            <person name="Lasko P."/>
            <person name="Lei Y."/>
            <person name="Levitsky A.A."/>
            <person name="Li J.H."/>
            <person name="Li Z."/>
            <person name="Liang Y."/>
            <person name="Lin X."/>
            <person name="Liu X."/>
            <person name="Mattei B."/>
            <person name="McIntosh T.C."/>
            <person name="McLeod M.P."/>
            <person name="McPherson D."/>
            <person name="Merkulov G."/>
            <person name="Milshina N.V."/>
            <person name="Mobarry C."/>
            <person name="Morris J."/>
            <person name="Moshrefi A."/>
            <person name="Mount S.M."/>
            <person name="Moy M."/>
            <person name="Murphy B."/>
            <person name="Murphy L."/>
            <person name="Muzny D.M."/>
            <person name="Nelson D.L."/>
            <person name="Nelson D.R."/>
            <person name="Nelson K.A."/>
            <person name="Nixon K."/>
            <person name="Nusskern D.R."/>
            <person name="Pacleb J.M."/>
            <person name="Palazzolo M."/>
            <person name="Pittman G.S."/>
            <person name="Pan S."/>
            <person name="Pollard J."/>
            <person name="Puri V."/>
            <person name="Reese M.G."/>
            <person name="Reinert K."/>
            <person name="Remington K."/>
            <person name="Saunders R.D.C."/>
            <person name="Scheeler F."/>
            <person name="Shen H."/>
            <person name="Shue B.C."/>
            <person name="Siden-Kiamos I."/>
            <person name="Simpson M."/>
            <person name="Skupski M.P."/>
            <person name="Smith T.J."/>
            <person name="Spier E."/>
            <person name="Spradling A.C."/>
            <person name="Stapleton M."/>
            <person name="Strong R."/>
            <person name="Sun E."/>
            <person name="Svirskas R."/>
            <person name="Tector C."/>
            <person name="Turner R."/>
            <person name="Venter E."/>
            <person name="Wang A.H."/>
            <person name="Wang X."/>
            <person name="Wang Z.-Y."/>
            <person name="Wassarman D.A."/>
            <person name="Weinstock G.M."/>
            <person name="Weissenbach J."/>
            <person name="Williams S.M."/>
            <person name="Woodage T."/>
            <person name="Worley K.C."/>
            <person name="Wu D."/>
            <person name="Yang S."/>
            <person name="Yao Q.A."/>
            <person name="Ye J."/>
            <person name="Yeh R.-F."/>
            <person name="Zaveri J.S."/>
            <person name="Zhan M."/>
            <person name="Zhang G."/>
            <person name="Zhao Q."/>
            <person name="Zheng L."/>
            <person name="Zheng X.H."/>
            <person name="Zhong F.N."/>
            <person name="Zhong W."/>
            <person name="Zhou X."/>
            <person name="Zhu S.C."/>
            <person name="Zhu X."/>
            <person name="Smith H.O."/>
            <person name="Gibbs R.A."/>
            <person name="Myers E.W."/>
            <person name="Rubin G.M."/>
            <person name="Venter J.C."/>
        </authorList>
    </citation>
    <scope>NUCLEOTIDE SEQUENCE [LARGE SCALE GENOMIC DNA]</scope>
    <source>
        <strain>Berkeley</strain>
    </source>
</reference>
<reference key="4">
    <citation type="journal article" date="2002" name="Genome Biol.">
        <title>Annotation of the Drosophila melanogaster euchromatic genome: a systematic review.</title>
        <authorList>
            <person name="Misra S."/>
            <person name="Crosby M.A."/>
            <person name="Mungall C.J."/>
            <person name="Matthews B.B."/>
            <person name="Campbell K.S."/>
            <person name="Hradecky P."/>
            <person name="Huang Y."/>
            <person name="Kaminker J.S."/>
            <person name="Millburn G.H."/>
            <person name="Prochnik S.E."/>
            <person name="Smith C.D."/>
            <person name="Tupy J.L."/>
            <person name="Whitfield E.J."/>
            <person name="Bayraktaroglu L."/>
            <person name="Berman B.P."/>
            <person name="Bettencourt B.R."/>
            <person name="Celniker S.E."/>
            <person name="de Grey A.D.N.J."/>
            <person name="Drysdale R.A."/>
            <person name="Harris N.L."/>
            <person name="Richter J."/>
            <person name="Russo S."/>
            <person name="Schroeder A.J."/>
            <person name="Shu S.Q."/>
            <person name="Stapleton M."/>
            <person name="Yamada C."/>
            <person name="Ashburner M."/>
            <person name="Gelbart W.M."/>
            <person name="Rubin G.M."/>
            <person name="Lewis S.E."/>
        </authorList>
    </citation>
    <scope>GENOME REANNOTATION</scope>
    <scope>ALTERNATIVE SPLICING</scope>
    <source>
        <strain>Berkeley</strain>
    </source>
</reference>
<reference key="5">
    <citation type="submission" date="2005-08" db="EMBL/GenBank/DDBJ databases">
        <authorList>
            <person name="Stapleton M."/>
            <person name="Carlson J.W."/>
            <person name="Chavez C."/>
            <person name="Frise E."/>
            <person name="George R.A."/>
            <person name="Pacleb J.M."/>
            <person name="Park S."/>
            <person name="Wan K.H."/>
            <person name="Yu C."/>
            <person name="Celniker S.E."/>
        </authorList>
    </citation>
    <scope>NUCLEOTIDE SEQUENCE [LARGE SCALE MRNA] (ISOFORM ABD-A1)</scope>
    <source>
        <strain>Berkeley</strain>
        <tissue>Embryo</tissue>
    </source>
</reference>
<feature type="chain" id="PRO_0000200249" description="Homeobox protein abdominal-A">
    <location>
        <begin position="1"/>
        <end position="590"/>
    </location>
</feature>
<feature type="DNA-binding region" description="Homeobox" evidence="1">
    <location>
        <begin position="398"/>
        <end position="457"/>
    </location>
</feature>
<feature type="region of interest" description="Disordered" evidence="2">
    <location>
        <begin position="53"/>
        <end position="154"/>
    </location>
</feature>
<feature type="region of interest" description="Disordered" evidence="2">
    <location>
        <begin position="187"/>
        <end position="230"/>
    </location>
</feature>
<feature type="region of interest" description="Disordered" evidence="2">
    <location>
        <begin position="468"/>
        <end position="525"/>
    </location>
</feature>
<feature type="short sequence motif" description="Antp-type hexapeptide">
    <location>
        <begin position="368"/>
        <end position="373"/>
    </location>
</feature>
<feature type="compositionally biased region" description="Low complexity" evidence="2">
    <location>
        <begin position="53"/>
        <end position="101"/>
    </location>
</feature>
<feature type="compositionally biased region" description="Low complexity" evidence="2">
    <location>
        <begin position="109"/>
        <end position="139"/>
    </location>
</feature>
<feature type="compositionally biased region" description="Basic residues" evidence="2">
    <location>
        <begin position="140"/>
        <end position="151"/>
    </location>
</feature>
<feature type="compositionally biased region" description="Low complexity" evidence="2">
    <location>
        <begin position="196"/>
        <end position="214"/>
    </location>
</feature>
<feature type="compositionally biased region" description="Polar residues" evidence="2">
    <location>
        <begin position="215"/>
        <end position="225"/>
    </location>
</feature>
<feature type="compositionally biased region" description="Basic and acidic residues" evidence="2">
    <location>
        <begin position="468"/>
        <end position="481"/>
    </location>
</feature>
<feature type="compositionally biased region" description="Low complexity" evidence="2">
    <location>
        <begin position="487"/>
        <end position="517"/>
    </location>
</feature>
<feature type="splice variant" id="VSP_002394" description="In isoform Abd-A1." evidence="4 5">
    <location>
        <begin position="1"/>
        <end position="260"/>
    </location>
</feature>
<feature type="helix" evidence="8">
    <location>
        <begin position="407"/>
        <end position="419"/>
    </location>
</feature>
<feature type="helix" evidence="8">
    <location>
        <begin position="425"/>
        <end position="434"/>
    </location>
</feature>
<feature type="helix" evidence="8">
    <location>
        <begin position="439"/>
        <end position="452"/>
    </location>
</feature>
<accession>P29555</accession>
<accession>Q5U161</accession>
<accession>Q9VER1</accession>
<proteinExistence type="evidence at protein level"/>
<organism>
    <name type="scientific">Drosophila melanogaster</name>
    <name type="common">Fruit fly</name>
    <dbReference type="NCBI Taxonomy" id="7227"/>
    <lineage>
        <taxon>Eukaryota</taxon>
        <taxon>Metazoa</taxon>
        <taxon>Ecdysozoa</taxon>
        <taxon>Arthropoda</taxon>
        <taxon>Hexapoda</taxon>
        <taxon>Insecta</taxon>
        <taxon>Pterygota</taxon>
        <taxon>Neoptera</taxon>
        <taxon>Endopterygota</taxon>
        <taxon>Diptera</taxon>
        <taxon>Brachycera</taxon>
        <taxon>Muscomorpha</taxon>
        <taxon>Ephydroidea</taxon>
        <taxon>Drosophilidae</taxon>
        <taxon>Drosophila</taxon>
        <taxon>Sophophora</taxon>
    </lineage>
</organism>
<name>ABDA_DROME</name>
<protein>
    <recommendedName>
        <fullName>Homeobox protein abdominal-A</fullName>
    </recommendedName>
</protein>